<keyword id="KW-0963">Cytoplasm</keyword>
<keyword id="KW-0489">Methyltransferase</keyword>
<keyword id="KW-1185">Reference proteome</keyword>
<keyword id="KW-0698">rRNA processing</keyword>
<keyword id="KW-0949">S-adenosyl-L-methionine</keyword>
<keyword id="KW-0808">Transferase</keyword>
<proteinExistence type="inferred from homology"/>
<evidence type="ECO:0000255" key="1">
    <source>
        <dbReference type="HAMAP-Rule" id="MF_00074"/>
    </source>
</evidence>
<sequence>MQPDRDTLLAGAQALGCPLSDTQADALLAYLGLLQRWNQVYNLTAIRDPKQMLVQHLLDSLAVIAPLNRVAGSAPLRLLDVGSGGGLPGVVIAVLRPDCQITCVDTVAKKATFIRQVTAELRLPQLVARHARVEQLTDGPYSVITARAFASLADLVKLTRPLLAPGGCWMAMKGQHPQAEIDALDADINVFHVEQLSVPGLDAERRLVWMRPRSVASS</sequence>
<reference key="1">
    <citation type="submission" date="2008-03" db="EMBL/GenBank/DDBJ databases">
        <title>Complete sequence of Leptothrix cholodnii SP-6.</title>
        <authorList>
            <consortium name="US DOE Joint Genome Institute"/>
            <person name="Copeland A."/>
            <person name="Lucas S."/>
            <person name="Lapidus A."/>
            <person name="Glavina del Rio T."/>
            <person name="Dalin E."/>
            <person name="Tice H."/>
            <person name="Bruce D."/>
            <person name="Goodwin L."/>
            <person name="Pitluck S."/>
            <person name="Chertkov O."/>
            <person name="Brettin T."/>
            <person name="Detter J.C."/>
            <person name="Han C."/>
            <person name="Kuske C.R."/>
            <person name="Schmutz J."/>
            <person name="Larimer F."/>
            <person name="Land M."/>
            <person name="Hauser L."/>
            <person name="Kyrpides N."/>
            <person name="Lykidis A."/>
            <person name="Emerson D."/>
            <person name="Richardson P."/>
        </authorList>
    </citation>
    <scope>NUCLEOTIDE SEQUENCE [LARGE SCALE GENOMIC DNA]</scope>
    <source>
        <strain>ATCC 51168 / LMG 8142 / SP-6</strain>
    </source>
</reference>
<name>RSMG_LEPCP</name>
<feature type="chain" id="PRO_1000092635" description="Ribosomal RNA small subunit methyltransferase G">
    <location>
        <begin position="1"/>
        <end position="218"/>
    </location>
</feature>
<feature type="binding site" evidence="1">
    <location>
        <position position="82"/>
    </location>
    <ligand>
        <name>S-adenosyl-L-methionine</name>
        <dbReference type="ChEBI" id="CHEBI:59789"/>
    </ligand>
</feature>
<feature type="binding site" evidence="1">
    <location>
        <position position="87"/>
    </location>
    <ligand>
        <name>S-adenosyl-L-methionine</name>
        <dbReference type="ChEBI" id="CHEBI:59789"/>
    </ligand>
</feature>
<feature type="binding site" evidence="1">
    <location>
        <begin position="133"/>
        <end position="134"/>
    </location>
    <ligand>
        <name>S-adenosyl-L-methionine</name>
        <dbReference type="ChEBI" id="CHEBI:59789"/>
    </ligand>
</feature>
<feature type="binding site" evidence="1">
    <location>
        <position position="147"/>
    </location>
    <ligand>
        <name>S-adenosyl-L-methionine</name>
        <dbReference type="ChEBI" id="CHEBI:59789"/>
    </ligand>
</feature>
<gene>
    <name evidence="1" type="primary">rsmG</name>
    <name type="ordered locus">Lcho_4197</name>
</gene>
<organism>
    <name type="scientific">Leptothrix cholodnii (strain ATCC 51168 / LMG 8142 / SP-6)</name>
    <name type="common">Leptothrix discophora (strain SP-6)</name>
    <dbReference type="NCBI Taxonomy" id="395495"/>
    <lineage>
        <taxon>Bacteria</taxon>
        <taxon>Pseudomonadati</taxon>
        <taxon>Pseudomonadota</taxon>
        <taxon>Betaproteobacteria</taxon>
        <taxon>Burkholderiales</taxon>
        <taxon>Sphaerotilaceae</taxon>
        <taxon>Leptothrix</taxon>
    </lineage>
</organism>
<protein>
    <recommendedName>
        <fullName evidence="1">Ribosomal RNA small subunit methyltransferase G</fullName>
        <ecNumber evidence="1">2.1.1.170</ecNumber>
    </recommendedName>
    <alternativeName>
        <fullName evidence="1">16S rRNA 7-methylguanosine methyltransferase</fullName>
        <shortName evidence="1">16S rRNA m7G methyltransferase</shortName>
    </alternativeName>
</protein>
<comment type="function">
    <text evidence="1">Specifically methylates the N7 position of guanine in position 527 of 16S rRNA.</text>
</comment>
<comment type="catalytic activity">
    <reaction evidence="1">
        <text>guanosine(527) in 16S rRNA + S-adenosyl-L-methionine = N(7)-methylguanosine(527) in 16S rRNA + S-adenosyl-L-homocysteine</text>
        <dbReference type="Rhea" id="RHEA:42732"/>
        <dbReference type="Rhea" id="RHEA-COMP:10209"/>
        <dbReference type="Rhea" id="RHEA-COMP:10210"/>
        <dbReference type="ChEBI" id="CHEBI:57856"/>
        <dbReference type="ChEBI" id="CHEBI:59789"/>
        <dbReference type="ChEBI" id="CHEBI:74269"/>
        <dbReference type="ChEBI" id="CHEBI:74480"/>
        <dbReference type="EC" id="2.1.1.170"/>
    </reaction>
</comment>
<comment type="subcellular location">
    <subcellularLocation>
        <location evidence="1">Cytoplasm</location>
    </subcellularLocation>
</comment>
<comment type="similarity">
    <text evidence="1">Belongs to the methyltransferase superfamily. RNA methyltransferase RsmG family.</text>
</comment>
<accession>B1XYL2</accession>
<dbReference type="EC" id="2.1.1.170" evidence="1"/>
<dbReference type="EMBL" id="CP001013">
    <property type="protein sequence ID" value="ACB36448.1"/>
    <property type="molecule type" value="Genomic_DNA"/>
</dbReference>
<dbReference type="RefSeq" id="WP_012349189.1">
    <property type="nucleotide sequence ID" value="NC_010524.1"/>
</dbReference>
<dbReference type="SMR" id="B1XYL2"/>
<dbReference type="STRING" id="395495.Lcho_4197"/>
<dbReference type="KEGG" id="lch:Lcho_4197"/>
<dbReference type="eggNOG" id="COG0357">
    <property type="taxonomic scope" value="Bacteria"/>
</dbReference>
<dbReference type="HOGENOM" id="CLU_065341_2_0_4"/>
<dbReference type="OrthoDB" id="9808773at2"/>
<dbReference type="Proteomes" id="UP000001693">
    <property type="component" value="Chromosome"/>
</dbReference>
<dbReference type="GO" id="GO:0005829">
    <property type="term" value="C:cytosol"/>
    <property type="evidence" value="ECO:0007669"/>
    <property type="project" value="TreeGrafter"/>
</dbReference>
<dbReference type="GO" id="GO:0070043">
    <property type="term" value="F:rRNA (guanine-N7-)-methyltransferase activity"/>
    <property type="evidence" value="ECO:0007669"/>
    <property type="project" value="UniProtKB-UniRule"/>
</dbReference>
<dbReference type="CDD" id="cd02440">
    <property type="entry name" value="AdoMet_MTases"/>
    <property type="match status" value="1"/>
</dbReference>
<dbReference type="Gene3D" id="3.40.50.150">
    <property type="entry name" value="Vaccinia Virus protein VP39"/>
    <property type="match status" value="1"/>
</dbReference>
<dbReference type="HAMAP" id="MF_00074">
    <property type="entry name" value="16SrRNA_methyltr_G"/>
    <property type="match status" value="1"/>
</dbReference>
<dbReference type="InterPro" id="IPR003682">
    <property type="entry name" value="rRNA_ssu_MeTfrase_G"/>
</dbReference>
<dbReference type="InterPro" id="IPR029063">
    <property type="entry name" value="SAM-dependent_MTases_sf"/>
</dbReference>
<dbReference type="NCBIfam" id="TIGR00138">
    <property type="entry name" value="rsmG_gidB"/>
    <property type="match status" value="1"/>
</dbReference>
<dbReference type="PANTHER" id="PTHR31760">
    <property type="entry name" value="S-ADENOSYL-L-METHIONINE-DEPENDENT METHYLTRANSFERASES SUPERFAMILY PROTEIN"/>
    <property type="match status" value="1"/>
</dbReference>
<dbReference type="PANTHER" id="PTHR31760:SF0">
    <property type="entry name" value="S-ADENOSYL-L-METHIONINE-DEPENDENT METHYLTRANSFERASES SUPERFAMILY PROTEIN"/>
    <property type="match status" value="1"/>
</dbReference>
<dbReference type="Pfam" id="PF02527">
    <property type="entry name" value="GidB"/>
    <property type="match status" value="1"/>
</dbReference>
<dbReference type="PIRSF" id="PIRSF003078">
    <property type="entry name" value="GidB"/>
    <property type="match status" value="1"/>
</dbReference>
<dbReference type="SUPFAM" id="SSF53335">
    <property type="entry name" value="S-adenosyl-L-methionine-dependent methyltransferases"/>
    <property type="match status" value="1"/>
</dbReference>